<feature type="chain" id="PRO_1000025034" description="2-isopropylmalate synthase">
    <location>
        <begin position="1"/>
        <end position="559"/>
    </location>
</feature>
<feature type="domain" description="Pyruvate carboxyltransferase" evidence="1">
    <location>
        <begin position="33"/>
        <end position="307"/>
    </location>
</feature>
<feature type="region of interest" description="Regulatory domain" evidence="1">
    <location>
        <begin position="439"/>
        <end position="559"/>
    </location>
</feature>
<feature type="binding site" evidence="1">
    <location>
        <position position="42"/>
    </location>
    <ligand>
        <name>Mg(2+)</name>
        <dbReference type="ChEBI" id="CHEBI:18420"/>
    </ligand>
</feature>
<feature type="binding site" evidence="1">
    <location>
        <position position="246"/>
    </location>
    <ligand>
        <name>Mg(2+)</name>
        <dbReference type="ChEBI" id="CHEBI:18420"/>
    </ligand>
</feature>
<feature type="binding site" evidence="1">
    <location>
        <position position="248"/>
    </location>
    <ligand>
        <name>Mg(2+)</name>
        <dbReference type="ChEBI" id="CHEBI:18420"/>
    </ligand>
</feature>
<feature type="binding site" evidence="1">
    <location>
        <position position="282"/>
    </location>
    <ligand>
        <name>Mg(2+)</name>
        <dbReference type="ChEBI" id="CHEBI:18420"/>
    </ligand>
</feature>
<keyword id="KW-0028">Amino-acid biosynthesis</keyword>
<keyword id="KW-0100">Branched-chain amino acid biosynthesis</keyword>
<keyword id="KW-0963">Cytoplasm</keyword>
<keyword id="KW-0432">Leucine biosynthesis</keyword>
<keyword id="KW-0460">Magnesium</keyword>
<keyword id="KW-0479">Metal-binding</keyword>
<keyword id="KW-0808">Transferase</keyword>
<dbReference type="EC" id="2.3.3.13" evidence="1"/>
<dbReference type="EMBL" id="CP000076">
    <property type="protein sequence ID" value="AAY94175.1"/>
    <property type="molecule type" value="Genomic_DNA"/>
</dbReference>
<dbReference type="RefSeq" id="WP_011063199.1">
    <property type="nucleotide sequence ID" value="NC_004129.6"/>
</dbReference>
<dbReference type="SMR" id="Q4K6V7"/>
<dbReference type="STRING" id="220664.PFL_4946"/>
<dbReference type="GeneID" id="57477928"/>
<dbReference type="KEGG" id="pfl:PFL_4946"/>
<dbReference type="PATRIC" id="fig|220664.5.peg.5067"/>
<dbReference type="eggNOG" id="COG0119">
    <property type="taxonomic scope" value="Bacteria"/>
</dbReference>
<dbReference type="HOGENOM" id="CLU_004588_3_0_6"/>
<dbReference type="UniPathway" id="UPA00048">
    <property type="reaction ID" value="UER00070"/>
</dbReference>
<dbReference type="Proteomes" id="UP000008540">
    <property type="component" value="Chromosome"/>
</dbReference>
<dbReference type="GO" id="GO:0005737">
    <property type="term" value="C:cytoplasm"/>
    <property type="evidence" value="ECO:0007669"/>
    <property type="project" value="UniProtKB-SubCell"/>
</dbReference>
<dbReference type="GO" id="GO:0003852">
    <property type="term" value="F:2-isopropylmalate synthase activity"/>
    <property type="evidence" value="ECO:0007669"/>
    <property type="project" value="UniProtKB-UniRule"/>
</dbReference>
<dbReference type="GO" id="GO:0003985">
    <property type="term" value="F:acetyl-CoA C-acetyltransferase activity"/>
    <property type="evidence" value="ECO:0007669"/>
    <property type="project" value="UniProtKB-UniRule"/>
</dbReference>
<dbReference type="GO" id="GO:0000287">
    <property type="term" value="F:magnesium ion binding"/>
    <property type="evidence" value="ECO:0007669"/>
    <property type="project" value="UniProtKB-UniRule"/>
</dbReference>
<dbReference type="GO" id="GO:0009098">
    <property type="term" value="P:L-leucine biosynthetic process"/>
    <property type="evidence" value="ECO:0007669"/>
    <property type="project" value="UniProtKB-UniRule"/>
</dbReference>
<dbReference type="CDD" id="cd07942">
    <property type="entry name" value="DRE_TIM_LeuA"/>
    <property type="match status" value="1"/>
</dbReference>
<dbReference type="FunFam" id="3.20.20.70:FF:000045">
    <property type="entry name" value="2-isopropylmalate synthase"/>
    <property type="match status" value="1"/>
</dbReference>
<dbReference type="Gene3D" id="3.30.160.270">
    <property type="match status" value="1"/>
</dbReference>
<dbReference type="Gene3D" id="3.20.20.70">
    <property type="entry name" value="Aldolase class I"/>
    <property type="match status" value="1"/>
</dbReference>
<dbReference type="HAMAP" id="MF_00572">
    <property type="entry name" value="LeuA_type2"/>
    <property type="match status" value="1"/>
</dbReference>
<dbReference type="InterPro" id="IPR013709">
    <property type="entry name" value="2-isopropylmalate_synth_dimer"/>
</dbReference>
<dbReference type="InterPro" id="IPR002034">
    <property type="entry name" value="AIPM/Hcit_synth_CS"/>
</dbReference>
<dbReference type="InterPro" id="IPR013785">
    <property type="entry name" value="Aldolase_TIM"/>
</dbReference>
<dbReference type="InterPro" id="IPR005668">
    <property type="entry name" value="IPM_Synthase"/>
</dbReference>
<dbReference type="InterPro" id="IPR054692">
    <property type="entry name" value="LeuA-like_post-cat"/>
</dbReference>
<dbReference type="InterPro" id="IPR036230">
    <property type="entry name" value="LeuA_allosteric_dom_sf"/>
</dbReference>
<dbReference type="InterPro" id="IPR039371">
    <property type="entry name" value="LeuA_N_DRE-TIM"/>
</dbReference>
<dbReference type="InterPro" id="IPR000891">
    <property type="entry name" value="PYR_CT"/>
</dbReference>
<dbReference type="NCBIfam" id="TIGR00970">
    <property type="entry name" value="leuA_yeast"/>
    <property type="match status" value="1"/>
</dbReference>
<dbReference type="NCBIfam" id="NF002991">
    <property type="entry name" value="PRK03739.1"/>
    <property type="match status" value="1"/>
</dbReference>
<dbReference type="PANTHER" id="PTHR46911">
    <property type="match status" value="1"/>
</dbReference>
<dbReference type="PANTHER" id="PTHR46911:SF1">
    <property type="entry name" value="2-ISOPROPYLMALATE SYNTHASE"/>
    <property type="match status" value="1"/>
</dbReference>
<dbReference type="Pfam" id="PF00682">
    <property type="entry name" value="HMGL-like"/>
    <property type="match status" value="1"/>
</dbReference>
<dbReference type="Pfam" id="PF22615">
    <property type="entry name" value="IPMS_D2"/>
    <property type="match status" value="1"/>
</dbReference>
<dbReference type="Pfam" id="PF08502">
    <property type="entry name" value="LeuA_dimer"/>
    <property type="match status" value="1"/>
</dbReference>
<dbReference type="SMART" id="SM00917">
    <property type="entry name" value="LeuA_dimer"/>
    <property type="match status" value="1"/>
</dbReference>
<dbReference type="SUPFAM" id="SSF110921">
    <property type="entry name" value="2-isopropylmalate synthase LeuA, allosteric (dimerisation) domain"/>
    <property type="match status" value="1"/>
</dbReference>
<dbReference type="SUPFAM" id="SSF51569">
    <property type="entry name" value="Aldolase"/>
    <property type="match status" value="1"/>
</dbReference>
<dbReference type="SUPFAM" id="SSF89000">
    <property type="entry name" value="post-HMGL domain-like"/>
    <property type="match status" value="1"/>
</dbReference>
<dbReference type="PROSITE" id="PS00815">
    <property type="entry name" value="AIPM_HOMOCIT_SYNTH_1"/>
    <property type="match status" value="1"/>
</dbReference>
<dbReference type="PROSITE" id="PS00816">
    <property type="entry name" value="AIPM_HOMOCIT_SYNTH_2"/>
    <property type="match status" value="1"/>
</dbReference>
<dbReference type="PROSITE" id="PS50991">
    <property type="entry name" value="PYR_CT"/>
    <property type="match status" value="1"/>
</dbReference>
<protein>
    <recommendedName>
        <fullName evidence="1">2-isopropylmalate synthase</fullName>
        <ecNumber evidence="1">2.3.3.13</ecNumber>
    </recommendedName>
    <alternativeName>
        <fullName evidence="1">Alpha-IPM synthase</fullName>
    </alternativeName>
    <alternativeName>
        <fullName evidence="1">Alpha-isopropylmalate synthase</fullName>
    </alternativeName>
</protein>
<organism>
    <name type="scientific">Pseudomonas fluorescens (strain ATCC BAA-477 / NRRL B-23932 / Pf-5)</name>
    <dbReference type="NCBI Taxonomy" id="220664"/>
    <lineage>
        <taxon>Bacteria</taxon>
        <taxon>Pseudomonadati</taxon>
        <taxon>Pseudomonadota</taxon>
        <taxon>Gammaproteobacteria</taxon>
        <taxon>Pseudomonadales</taxon>
        <taxon>Pseudomonadaceae</taxon>
        <taxon>Pseudomonas</taxon>
    </lineage>
</organism>
<accession>Q4K6V7</accession>
<name>LEU1_PSEF5</name>
<evidence type="ECO:0000255" key="1">
    <source>
        <dbReference type="HAMAP-Rule" id="MF_00572"/>
    </source>
</evidence>
<comment type="function">
    <text evidence="1">Catalyzes the condensation of the acetyl group of acetyl-CoA with 3-methyl-2-oxobutanoate (2-ketoisovalerate) to form 3-carboxy-3-hydroxy-4-methylpentanoate (2-isopropylmalate).</text>
</comment>
<comment type="catalytic activity">
    <reaction evidence="1">
        <text>3-methyl-2-oxobutanoate + acetyl-CoA + H2O = (2S)-2-isopropylmalate + CoA + H(+)</text>
        <dbReference type="Rhea" id="RHEA:21524"/>
        <dbReference type="ChEBI" id="CHEBI:1178"/>
        <dbReference type="ChEBI" id="CHEBI:11851"/>
        <dbReference type="ChEBI" id="CHEBI:15377"/>
        <dbReference type="ChEBI" id="CHEBI:15378"/>
        <dbReference type="ChEBI" id="CHEBI:57287"/>
        <dbReference type="ChEBI" id="CHEBI:57288"/>
        <dbReference type="EC" id="2.3.3.13"/>
    </reaction>
</comment>
<comment type="cofactor">
    <cofactor evidence="1">
        <name>Mg(2+)</name>
        <dbReference type="ChEBI" id="CHEBI:18420"/>
    </cofactor>
</comment>
<comment type="pathway">
    <text evidence="1">Amino-acid biosynthesis; L-leucine biosynthesis; L-leucine from 3-methyl-2-oxobutanoate: step 1/4.</text>
</comment>
<comment type="subunit">
    <text evidence="1">Homodimer.</text>
</comment>
<comment type="subcellular location">
    <subcellularLocation>
        <location evidence="1">Cytoplasm</location>
    </subcellularLocation>
</comment>
<comment type="similarity">
    <text evidence="1">Belongs to the alpha-IPM synthase/homocitrate synthase family. LeuA type 2 subfamily.</text>
</comment>
<sequence>MTMLKDPSSKYRAFPTINLPDRTWPSKTITSAPIWCSSDLRDGNQSLIEPMDAVKKLRFWKTLVAVGVKEIEASFPAASQTDFDFVRTLIEGGHIPDDTTIQVLTQAREDLIARTFESLRGAKKAIVHLYNATSPSFRRIVFNQDKAGVKEIAVNAAKLFVKYAAQQPETQWQFEYSPETFSATELEFAKEVCDAVVEVWNATPSNKVILNLPATVEVATPNIYADQIEWFCRNINRRDSVLISLHTHNDRGTGVAATELGLMAGADRVEGCLFGNGERTGNVDLVTVALNLYTQGVNPELDFSDIDGVRKVVEECNQIAVHPRHPYVGDLVHTAFSGSHQDAIRKGFAQQKADGLWEVPYLPIDPADIGRSYEAVIRVNSQSGKGGIAYLLEQEYGISLPRRMQIEFSQVVQRETDRLGLEMTAQQIHALLHSEYLQANTPYALVSHRLQEENGHSAVEVEVSSKGQGETNLSWRGKGNGALEALVAGLPVPVEIMDYNEHAIGAGTNAKAAAYIELRVNGERAVHGVGIDENITTASFKALFSALNRSLSEQQAKAA</sequence>
<reference key="1">
    <citation type="journal article" date="2005" name="Nat. Biotechnol.">
        <title>Complete genome sequence of the plant commensal Pseudomonas fluorescens Pf-5.</title>
        <authorList>
            <person name="Paulsen I.T."/>
            <person name="Press C.M."/>
            <person name="Ravel J."/>
            <person name="Kobayashi D.Y."/>
            <person name="Myers G.S.A."/>
            <person name="Mavrodi D.V."/>
            <person name="DeBoy R.T."/>
            <person name="Seshadri R."/>
            <person name="Ren Q."/>
            <person name="Madupu R."/>
            <person name="Dodson R.J."/>
            <person name="Durkin A.S."/>
            <person name="Brinkac L.M."/>
            <person name="Daugherty S.C."/>
            <person name="Sullivan S.A."/>
            <person name="Rosovitz M.J."/>
            <person name="Gwinn M.L."/>
            <person name="Zhou L."/>
            <person name="Schneider D.J."/>
            <person name="Cartinhour S.W."/>
            <person name="Nelson W.C."/>
            <person name="Weidman J."/>
            <person name="Watkins K."/>
            <person name="Tran K."/>
            <person name="Khouri H."/>
            <person name="Pierson E.A."/>
            <person name="Pierson L.S. III"/>
            <person name="Thomashow L.S."/>
            <person name="Loper J.E."/>
        </authorList>
    </citation>
    <scope>NUCLEOTIDE SEQUENCE [LARGE SCALE GENOMIC DNA]</scope>
    <source>
        <strain>ATCC BAA-477 / NRRL B-23932 / Pf-5</strain>
    </source>
</reference>
<proteinExistence type="inferred from homology"/>
<gene>
    <name evidence="1" type="primary">leuA</name>
    <name type="ordered locus">PFL_4946</name>
</gene>